<comment type="catalytic activity">
    <reaction evidence="1">
        <text>sulfate + ATP + H(+) = adenosine 5'-phosphosulfate + diphosphate</text>
        <dbReference type="Rhea" id="RHEA:18133"/>
        <dbReference type="ChEBI" id="CHEBI:15378"/>
        <dbReference type="ChEBI" id="CHEBI:16189"/>
        <dbReference type="ChEBI" id="CHEBI:30616"/>
        <dbReference type="ChEBI" id="CHEBI:33019"/>
        <dbReference type="ChEBI" id="CHEBI:58243"/>
        <dbReference type="EC" id="2.7.7.4"/>
    </reaction>
</comment>
<comment type="pathway">
    <text evidence="1">Sulfur metabolism; hydrogen sulfide biosynthesis; sulfite from sulfate: step 1/3.</text>
</comment>
<comment type="similarity">
    <text evidence="1">Belongs to the sulfate adenylyltransferase family.</text>
</comment>
<feature type="chain" id="PRO_0000340626" description="Sulfate adenylyltransferase">
    <location>
        <begin position="1"/>
        <end position="383"/>
    </location>
</feature>
<evidence type="ECO:0000255" key="1">
    <source>
        <dbReference type="HAMAP-Rule" id="MF_00066"/>
    </source>
</evidence>
<organism>
    <name type="scientific">Pelotomaculum thermopropionicum (strain DSM 13744 / JCM 10971 / SI)</name>
    <dbReference type="NCBI Taxonomy" id="370438"/>
    <lineage>
        <taxon>Bacteria</taxon>
        <taxon>Bacillati</taxon>
        <taxon>Bacillota</taxon>
        <taxon>Clostridia</taxon>
        <taxon>Eubacteriales</taxon>
        <taxon>Desulfotomaculaceae</taxon>
        <taxon>Pelotomaculum</taxon>
    </lineage>
</organism>
<proteinExistence type="inferred from homology"/>
<keyword id="KW-0067">ATP-binding</keyword>
<keyword id="KW-0547">Nucleotide-binding</keyword>
<keyword id="KW-0548">Nucleotidyltransferase</keyword>
<keyword id="KW-1185">Reference proteome</keyword>
<keyword id="KW-0808">Transferase</keyword>
<dbReference type="EC" id="2.7.7.4" evidence="1"/>
<dbReference type="EMBL" id="AP009389">
    <property type="protein sequence ID" value="BAF58422.1"/>
    <property type="molecule type" value="Genomic_DNA"/>
</dbReference>
<dbReference type="SMR" id="A5D5R7"/>
<dbReference type="STRING" id="370438.PTH_0241"/>
<dbReference type="KEGG" id="pth:PTH_0241"/>
<dbReference type="eggNOG" id="COG2046">
    <property type="taxonomic scope" value="Bacteria"/>
</dbReference>
<dbReference type="HOGENOM" id="CLU_022950_1_1_9"/>
<dbReference type="UniPathway" id="UPA00140">
    <property type="reaction ID" value="UER00204"/>
</dbReference>
<dbReference type="Proteomes" id="UP000006556">
    <property type="component" value="Chromosome"/>
</dbReference>
<dbReference type="GO" id="GO:0005524">
    <property type="term" value="F:ATP binding"/>
    <property type="evidence" value="ECO:0007669"/>
    <property type="project" value="UniProtKB-KW"/>
</dbReference>
<dbReference type="GO" id="GO:0004781">
    <property type="term" value="F:sulfate adenylyltransferase (ATP) activity"/>
    <property type="evidence" value="ECO:0007669"/>
    <property type="project" value="UniProtKB-UniRule"/>
</dbReference>
<dbReference type="GO" id="GO:0070814">
    <property type="term" value="P:hydrogen sulfide biosynthetic process"/>
    <property type="evidence" value="ECO:0007669"/>
    <property type="project" value="UniProtKB-UniRule"/>
</dbReference>
<dbReference type="GO" id="GO:0000103">
    <property type="term" value="P:sulfate assimilation"/>
    <property type="evidence" value="ECO:0007669"/>
    <property type="project" value="UniProtKB-UniRule"/>
</dbReference>
<dbReference type="CDD" id="cd00517">
    <property type="entry name" value="ATPS"/>
    <property type="match status" value="1"/>
</dbReference>
<dbReference type="Gene3D" id="3.40.50.620">
    <property type="entry name" value="HUPs"/>
    <property type="match status" value="1"/>
</dbReference>
<dbReference type="Gene3D" id="3.10.400.10">
    <property type="entry name" value="Sulfate adenylyltransferase"/>
    <property type="match status" value="1"/>
</dbReference>
<dbReference type="HAMAP" id="MF_00066">
    <property type="entry name" value="Sulf_adenylyltr"/>
    <property type="match status" value="1"/>
</dbReference>
<dbReference type="InterPro" id="IPR025980">
    <property type="entry name" value="ATP-Sase_PUA-like_dom"/>
</dbReference>
<dbReference type="InterPro" id="IPR015947">
    <property type="entry name" value="PUA-like_sf"/>
</dbReference>
<dbReference type="InterPro" id="IPR014729">
    <property type="entry name" value="Rossmann-like_a/b/a_fold"/>
</dbReference>
<dbReference type="InterPro" id="IPR020792">
    <property type="entry name" value="SO4_adenylyltransferase_pro"/>
</dbReference>
<dbReference type="InterPro" id="IPR024951">
    <property type="entry name" value="Sulfurylase_cat_dom"/>
</dbReference>
<dbReference type="InterPro" id="IPR002650">
    <property type="entry name" value="Sulphate_adenylyltransferase"/>
</dbReference>
<dbReference type="NCBIfam" id="NF003166">
    <property type="entry name" value="PRK04149.1"/>
    <property type="match status" value="1"/>
</dbReference>
<dbReference type="NCBIfam" id="TIGR00339">
    <property type="entry name" value="sopT"/>
    <property type="match status" value="1"/>
</dbReference>
<dbReference type="PANTHER" id="PTHR43509">
    <property type="match status" value="1"/>
</dbReference>
<dbReference type="PANTHER" id="PTHR43509:SF1">
    <property type="entry name" value="SULFATE ADENYLYLTRANSFERASE"/>
    <property type="match status" value="1"/>
</dbReference>
<dbReference type="Pfam" id="PF01747">
    <property type="entry name" value="ATP-sulfurylase"/>
    <property type="match status" value="1"/>
</dbReference>
<dbReference type="Pfam" id="PF14306">
    <property type="entry name" value="PUA_2"/>
    <property type="match status" value="1"/>
</dbReference>
<dbReference type="SUPFAM" id="SSF52374">
    <property type="entry name" value="Nucleotidylyl transferase"/>
    <property type="match status" value="1"/>
</dbReference>
<dbReference type="SUPFAM" id="SSF88697">
    <property type="entry name" value="PUA domain-like"/>
    <property type="match status" value="1"/>
</dbReference>
<name>SAT_PELTS</name>
<gene>
    <name evidence="1" type="primary">sat</name>
    <name type="ordered locus">PTH_0241</name>
</gene>
<sequence length="383" mass="43013">MAVKPHGGTLIDRVLKGPAREEALKRAKELPRLFLDRWEASDLELIANGAFSPLAGFMNKADYENVVDNMRLADGTVWTIPIVLGVASGEAGSLAPGREAALCAEDGELLGLIKVEEIYDYDRRREAEKVYKTTDEAHPGVKRVYERAQYLLGGEISLISRRRPGQFPEMYLDPSETRRIFAEKGWKRVAAFQTRNPIHRAHEYLLKCALEICDGLFVNPLVGETKSDDVPAAVRVECYNVLLSRYFPADRVFLSAFPAAMRYAGPREAVFHAIVRKNYGATHFIVGRDHAGVGSYYGAYDAQLIFDNFEPEELGITPLFFEHAFYCRTCGGMASRKTCPHGGEDRVFLSGTRVREMLSAGEMPPEEFTRREVAEVLVRYYAK</sequence>
<accession>A5D5R7</accession>
<protein>
    <recommendedName>
        <fullName evidence="1">Sulfate adenylyltransferase</fullName>
        <ecNumber evidence="1">2.7.7.4</ecNumber>
    </recommendedName>
    <alternativeName>
        <fullName evidence="1">ATP-sulfurylase</fullName>
    </alternativeName>
    <alternativeName>
        <fullName evidence="1">Sulfate adenylate transferase</fullName>
        <shortName evidence="1">SAT</shortName>
    </alternativeName>
</protein>
<reference key="1">
    <citation type="journal article" date="2008" name="Genome Res.">
        <title>The genome of Pelotomaculum thermopropionicum reveals niche-associated evolution in anaerobic microbiota.</title>
        <authorList>
            <person name="Kosaka T."/>
            <person name="Kato S."/>
            <person name="Shimoyama T."/>
            <person name="Ishii S."/>
            <person name="Abe T."/>
            <person name="Watanabe K."/>
        </authorList>
    </citation>
    <scope>NUCLEOTIDE SEQUENCE [LARGE SCALE GENOMIC DNA]</scope>
    <source>
        <strain>DSM 13744 / JCM 10971 / SI</strain>
    </source>
</reference>